<comment type="function">
    <text evidence="1 4">May play a role in the control of plant organ development (By similarity). Does not show transactivation activity in yeast (PubMed:23192389).</text>
</comment>
<comment type="subcellular location">
    <subcellularLocation>
        <location evidence="4 5">Nucleus</location>
    </subcellularLocation>
    <text evidence="4">Detected at discrete loci in the nucleus.</text>
</comment>
<comment type="tissue specificity">
    <text evidence="5">Expressed in roots and vascular tissues near the shoot apex in young seedlings.</text>
</comment>
<comment type="induction">
    <text evidence="5">By auxin, cytokinin, gibberellin, abscisic acid (ABA), brassinosteroid and hypoxia.</text>
</comment>
<comment type="disruption phenotype">
    <text evidence="4">No visible phenotype under normal growth conditions.</text>
</comment>
<name>FHA1_ARATH</name>
<gene>
    <name evidence="6" type="primary">FHA1</name>
    <name evidence="8" type="ordered locus">At3g07260</name>
    <name evidence="9" type="ORF">T1B9.7</name>
</gene>
<organism>
    <name type="scientific">Arabidopsis thaliana</name>
    <name type="common">Mouse-ear cress</name>
    <dbReference type="NCBI Taxonomy" id="3702"/>
    <lineage>
        <taxon>Eukaryota</taxon>
        <taxon>Viridiplantae</taxon>
        <taxon>Streptophyta</taxon>
        <taxon>Embryophyta</taxon>
        <taxon>Tracheophyta</taxon>
        <taxon>Spermatophyta</taxon>
        <taxon>Magnoliopsida</taxon>
        <taxon>eudicotyledons</taxon>
        <taxon>Gunneridae</taxon>
        <taxon>Pentapetalae</taxon>
        <taxon>rosids</taxon>
        <taxon>malvids</taxon>
        <taxon>Brassicales</taxon>
        <taxon>Brassicaceae</taxon>
        <taxon>Camelineae</taxon>
        <taxon>Arabidopsis</taxon>
    </lineage>
</organism>
<sequence length="251" mass="27980">MATAVGSGSDVEVGFAKLQGEDFEYYMQSYSIILGRNSKKSTVDVDLSSLGGGMNISRNHARIFYDFTRRRFSLEVLGKNGCFVEGVLHLPGNPNVKLDSQDLLQIGDKEFYFLLPVWSILGGPLGPRHHVLGKATVVPYHNYHSGPGSGSGKNGVRSRELYEYDDEDDDEEEDIRGSGKKTWRDGHEGVYASGEKKREGRSKADREADDQQFLQLMHGSGWSVTDIKGVWKRMASQSSKKIPITRRLGYP</sequence>
<keyword id="KW-0217">Developmental protein</keyword>
<keyword id="KW-0539">Nucleus</keyword>
<keyword id="KW-1185">Reference proteome</keyword>
<evidence type="ECO:0000250" key="1">
    <source>
        <dbReference type="UniProtKB" id="Q9SFV2"/>
    </source>
</evidence>
<evidence type="ECO:0000255" key="2">
    <source>
        <dbReference type="PROSITE-ProRule" id="PRU00086"/>
    </source>
</evidence>
<evidence type="ECO:0000256" key="3">
    <source>
        <dbReference type="SAM" id="MobiDB-lite"/>
    </source>
</evidence>
<evidence type="ECO:0000269" key="4">
    <source>
    </source>
</evidence>
<evidence type="ECO:0000269" key="5">
    <source ref="3"/>
</evidence>
<evidence type="ECO:0000303" key="6">
    <source ref="3"/>
</evidence>
<evidence type="ECO:0000305" key="7"/>
<evidence type="ECO:0000312" key="8">
    <source>
        <dbReference type="Araport" id="AT3G07260"/>
    </source>
</evidence>
<evidence type="ECO:0000312" key="9">
    <source>
        <dbReference type="EMBL" id="AAF20220.1"/>
    </source>
</evidence>
<protein>
    <recommendedName>
        <fullName evidence="7">FHA domain-containing protein FHA1</fullName>
    </recommendedName>
    <alternativeName>
        <fullName evidence="6">Protein FORKHEAD-ASSOCIATED DOMAIN 1</fullName>
        <shortName evidence="6">AtFHA1</shortName>
    </alternativeName>
</protein>
<feature type="chain" id="PRO_0000433003" description="FHA domain-containing protein FHA1">
    <location>
        <begin position="1"/>
        <end position="251"/>
    </location>
</feature>
<feature type="domain" description="FHA" evidence="2">
    <location>
        <begin position="32"/>
        <end position="89"/>
    </location>
</feature>
<feature type="region of interest" description="Disordered" evidence="3">
    <location>
        <begin position="163"/>
        <end position="209"/>
    </location>
</feature>
<feature type="compositionally biased region" description="Acidic residues" evidence="3">
    <location>
        <begin position="163"/>
        <end position="174"/>
    </location>
</feature>
<feature type="compositionally biased region" description="Basic and acidic residues" evidence="3">
    <location>
        <begin position="182"/>
        <end position="206"/>
    </location>
</feature>
<accession>Q9SFV6</accession>
<reference key="1">
    <citation type="journal article" date="2000" name="Nature">
        <title>Sequence and analysis of chromosome 3 of the plant Arabidopsis thaliana.</title>
        <authorList>
            <person name="Salanoubat M."/>
            <person name="Lemcke K."/>
            <person name="Rieger M."/>
            <person name="Ansorge W."/>
            <person name="Unseld M."/>
            <person name="Fartmann B."/>
            <person name="Valle G."/>
            <person name="Bloecker H."/>
            <person name="Perez-Alonso M."/>
            <person name="Obermaier B."/>
            <person name="Delseny M."/>
            <person name="Boutry M."/>
            <person name="Grivell L.A."/>
            <person name="Mache R."/>
            <person name="Puigdomenech P."/>
            <person name="De Simone V."/>
            <person name="Choisne N."/>
            <person name="Artiguenave F."/>
            <person name="Robert C."/>
            <person name="Brottier P."/>
            <person name="Wincker P."/>
            <person name="Cattolico L."/>
            <person name="Weissenbach J."/>
            <person name="Saurin W."/>
            <person name="Quetier F."/>
            <person name="Schaefer M."/>
            <person name="Mueller-Auer S."/>
            <person name="Gabel C."/>
            <person name="Fuchs M."/>
            <person name="Benes V."/>
            <person name="Wurmbach E."/>
            <person name="Drzonek H."/>
            <person name="Erfle H."/>
            <person name="Jordan N."/>
            <person name="Bangert S."/>
            <person name="Wiedelmann R."/>
            <person name="Kranz H."/>
            <person name="Voss H."/>
            <person name="Holland R."/>
            <person name="Brandt P."/>
            <person name="Nyakatura G."/>
            <person name="Vezzi A."/>
            <person name="D'Angelo M."/>
            <person name="Pallavicini A."/>
            <person name="Toppo S."/>
            <person name="Simionati B."/>
            <person name="Conrad A."/>
            <person name="Hornischer K."/>
            <person name="Kauer G."/>
            <person name="Loehnert T.-H."/>
            <person name="Nordsiek G."/>
            <person name="Reichelt J."/>
            <person name="Scharfe M."/>
            <person name="Schoen O."/>
            <person name="Bargues M."/>
            <person name="Terol J."/>
            <person name="Climent J."/>
            <person name="Navarro P."/>
            <person name="Collado C."/>
            <person name="Perez-Perez A."/>
            <person name="Ottenwaelder B."/>
            <person name="Duchemin D."/>
            <person name="Cooke R."/>
            <person name="Laudie M."/>
            <person name="Berger-Llauro C."/>
            <person name="Purnelle B."/>
            <person name="Masuy D."/>
            <person name="de Haan M."/>
            <person name="Maarse A.C."/>
            <person name="Alcaraz J.-P."/>
            <person name="Cottet A."/>
            <person name="Casacuberta E."/>
            <person name="Monfort A."/>
            <person name="Argiriou A."/>
            <person name="Flores M."/>
            <person name="Liguori R."/>
            <person name="Vitale D."/>
            <person name="Mannhaupt G."/>
            <person name="Haase D."/>
            <person name="Schoof H."/>
            <person name="Rudd S."/>
            <person name="Zaccaria P."/>
            <person name="Mewes H.-W."/>
            <person name="Mayer K.F.X."/>
            <person name="Kaul S."/>
            <person name="Town C.D."/>
            <person name="Koo H.L."/>
            <person name="Tallon L.J."/>
            <person name="Jenkins J."/>
            <person name="Rooney T."/>
            <person name="Rizzo M."/>
            <person name="Walts A."/>
            <person name="Utterback T."/>
            <person name="Fujii C.Y."/>
            <person name="Shea T.P."/>
            <person name="Creasy T.H."/>
            <person name="Haas B."/>
            <person name="Maiti R."/>
            <person name="Wu D."/>
            <person name="Peterson J."/>
            <person name="Van Aken S."/>
            <person name="Pai G."/>
            <person name="Militscher J."/>
            <person name="Sellers P."/>
            <person name="Gill J.E."/>
            <person name="Feldblyum T.V."/>
            <person name="Preuss D."/>
            <person name="Lin X."/>
            <person name="Nierman W.C."/>
            <person name="Salzberg S.L."/>
            <person name="White O."/>
            <person name="Venter J.C."/>
            <person name="Fraser C.M."/>
            <person name="Kaneko T."/>
            <person name="Nakamura Y."/>
            <person name="Sato S."/>
            <person name="Kato T."/>
            <person name="Asamizu E."/>
            <person name="Sasamoto S."/>
            <person name="Kimura T."/>
            <person name="Idesawa K."/>
            <person name="Kawashima K."/>
            <person name="Kishida Y."/>
            <person name="Kiyokawa C."/>
            <person name="Kohara M."/>
            <person name="Matsumoto M."/>
            <person name="Matsuno A."/>
            <person name="Muraki A."/>
            <person name="Nakayama S."/>
            <person name="Nakazaki N."/>
            <person name="Shinpo S."/>
            <person name="Takeuchi C."/>
            <person name="Wada T."/>
            <person name="Watanabe A."/>
            <person name="Yamada M."/>
            <person name="Yasuda M."/>
            <person name="Tabata S."/>
        </authorList>
    </citation>
    <scope>NUCLEOTIDE SEQUENCE [LARGE SCALE GENOMIC DNA]</scope>
    <source>
        <strain>cv. Columbia</strain>
    </source>
</reference>
<reference key="2">
    <citation type="journal article" date="2017" name="Plant J.">
        <title>Araport11: a complete reannotation of the Arabidopsis thaliana reference genome.</title>
        <authorList>
            <person name="Cheng C.Y."/>
            <person name="Krishnakumar V."/>
            <person name="Chan A.P."/>
            <person name="Thibaud-Nissen F."/>
            <person name="Schobel S."/>
            <person name="Town C.D."/>
        </authorList>
    </citation>
    <scope>GENOME REANNOTATION</scope>
    <source>
        <strain>cv. Columbia</strain>
    </source>
</reference>
<reference key="3">
    <citation type="journal article" date="2003" name="Plant Sci.">
        <title>Molecular characteristics and differential expression of two nuclear factors containing the FHA domain in Arabidopsis.</title>
        <authorList>
            <person name="Ahn J.-W."/>
            <person name="Kim M."/>
            <person name="Bang J.-W."/>
            <person name="Pai H.-S."/>
        </authorList>
    </citation>
    <scope>SUBCELLULAR LOCATION</scope>
    <scope>TISSUE SPECIFICITY</scope>
    <scope>INDUCTION</scope>
</reference>
<reference key="4">
    <citation type="journal article" date="2013" name="Planta">
        <title>The forkhead-associated domain 2 (FHA2) in Arabidopsis plays a role in plant fertility by regulating stamen development.</title>
        <authorList>
            <person name="Ahn E.R."/>
            <person name="Cho H.K."/>
            <person name="Pai H.S."/>
        </authorList>
    </citation>
    <scope>FUNCTION</scope>
    <scope>SUBCELLULAR LOCATION</scope>
    <scope>DISRUPTION PHENOTYPE</scope>
</reference>
<dbReference type="EMBL" id="AC012395">
    <property type="protein sequence ID" value="AAF20220.1"/>
    <property type="molecule type" value="Genomic_DNA"/>
</dbReference>
<dbReference type="EMBL" id="CP002686">
    <property type="protein sequence ID" value="AEE74519.1"/>
    <property type="molecule type" value="Genomic_DNA"/>
</dbReference>
<dbReference type="RefSeq" id="NP_187382.1">
    <property type="nucleotide sequence ID" value="NM_111606.2"/>
</dbReference>
<dbReference type="SMR" id="Q9SFV6"/>
<dbReference type="FunCoup" id="Q9SFV6">
    <property type="interactions" value="3"/>
</dbReference>
<dbReference type="IntAct" id="Q9SFV6">
    <property type="interactions" value="28"/>
</dbReference>
<dbReference type="STRING" id="3702.Q9SFV6"/>
<dbReference type="PaxDb" id="3702-AT3G07260.1"/>
<dbReference type="ProteomicsDB" id="230420"/>
<dbReference type="EnsemblPlants" id="AT3G07260.1">
    <property type="protein sequence ID" value="AT3G07260.1"/>
    <property type="gene ID" value="AT3G07260"/>
</dbReference>
<dbReference type="GeneID" id="819914"/>
<dbReference type="Gramene" id="AT3G07260.1">
    <property type="protein sequence ID" value="AT3G07260.1"/>
    <property type="gene ID" value="AT3G07260"/>
</dbReference>
<dbReference type="KEGG" id="ath:AT3G07260"/>
<dbReference type="Araport" id="AT3G07260"/>
<dbReference type="TAIR" id="AT3G07260"/>
<dbReference type="eggNOG" id="KOG2294">
    <property type="taxonomic scope" value="Eukaryota"/>
</dbReference>
<dbReference type="HOGENOM" id="CLU_068161_0_0_1"/>
<dbReference type="InParanoid" id="Q9SFV6"/>
<dbReference type="OMA" id="REGYDGY"/>
<dbReference type="PhylomeDB" id="Q9SFV6"/>
<dbReference type="PRO" id="PR:Q9SFV6"/>
<dbReference type="Proteomes" id="UP000006548">
    <property type="component" value="Chromosome 3"/>
</dbReference>
<dbReference type="ExpressionAtlas" id="Q9SFV6">
    <property type="expression patterns" value="baseline and differential"/>
</dbReference>
<dbReference type="GO" id="GO:0005634">
    <property type="term" value="C:nucleus"/>
    <property type="evidence" value="ECO:0000314"/>
    <property type="project" value="UniProtKB"/>
</dbReference>
<dbReference type="GO" id="GO:0060962">
    <property type="term" value="P:regulation of ribosomal protein gene transcription by RNA polymerase II"/>
    <property type="evidence" value="ECO:0007669"/>
    <property type="project" value="InterPro"/>
</dbReference>
<dbReference type="CDD" id="cd22701">
    <property type="entry name" value="FHA_FKH1-like"/>
    <property type="match status" value="1"/>
</dbReference>
<dbReference type="FunFam" id="2.60.200.20:FF:000014">
    <property type="entry name" value="FHA domain-containing protein FHA2"/>
    <property type="match status" value="1"/>
</dbReference>
<dbReference type="Gene3D" id="2.60.200.20">
    <property type="match status" value="1"/>
</dbReference>
<dbReference type="InterPro" id="IPR000253">
    <property type="entry name" value="FHA_dom"/>
</dbReference>
<dbReference type="InterPro" id="IPR045178">
    <property type="entry name" value="Fhl1/FHA1"/>
</dbReference>
<dbReference type="InterPro" id="IPR008984">
    <property type="entry name" value="SMAD_FHA_dom_sf"/>
</dbReference>
<dbReference type="PANTHER" id="PTHR21712">
    <property type="entry name" value="PRE-RRNA-PROCESSING PROTEIN FHL1"/>
    <property type="match status" value="1"/>
</dbReference>
<dbReference type="PANTHER" id="PTHR21712:SF29">
    <property type="entry name" value="PRE-RRNA-PROCESSING PROTEIN FHL1"/>
    <property type="match status" value="1"/>
</dbReference>
<dbReference type="Pfam" id="PF00498">
    <property type="entry name" value="FHA"/>
    <property type="match status" value="1"/>
</dbReference>
<dbReference type="SMART" id="SM00240">
    <property type="entry name" value="FHA"/>
    <property type="match status" value="1"/>
</dbReference>
<dbReference type="SUPFAM" id="SSF49879">
    <property type="entry name" value="SMAD/FHA domain"/>
    <property type="match status" value="1"/>
</dbReference>
<dbReference type="PROSITE" id="PS50006">
    <property type="entry name" value="FHA_DOMAIN"/>
    <property type="match status" value="1"/>
</dbReference>
<proteinExistence type="evidence at transcript level"/>